<gene>
    <name evidence="1" type="primary">dnaA</name>
    <name type="ordered locus">SBO_3675</name>
</gene>
<feature type="chain" id="PRO_1000048726" description="Chromosomal replication initiator protein DnaA">
    <location>
        <begin position="1"/>
        <end position="467"/>
    </location>
</feature>
<feature type="region of interest" description="Domain I, interacts with DnaA modulators" evidence="1">
    <location>
        <begin position="1"/>
        <end position="90"/>
    </location>
</feature>
<feature type="region of interest" description="Domain II" evidence="1">
    <location>
        <begin position="91"/>
        <end position="130"/>
    </location>
</feature>
<feature type="region of interest" description="Disordered" evidence="2">
    <location>
        <begin position="98"/>
        <end position="119"/>
    </location>
</feature>
<feature type="region of interest" description="Domain III, AAA+ region" evidence="1">
    <location>
        <begin position="131"/>
        <end position="347"/>
    </location>
</feature>
<feature type="region of interest" description="Domain IV, binds dsDNA" evidence="1">
    <location>
        <begin position="348"/>
        <end position="467"/>
    </location>
</feature>
<feature type="compositionally biased region" description="Low complexity" evidence="2">
    <location>
        <begin position="98"/>
        <end position="111"/>
    </location>
</feature>
<feature type="binding site" evidence="1">
    <location>
        <position position="175"/>
    </location>
    <ligand>
        <name>ATP</name>
        <dbReference type="ChEBI" id="CHEBI:30616"/>
    </ligand>
</feature>
<feature type="binding site" evidence="1">
    <location>
        <position position="177"/>
    </location>
    <ligand>
        <name>ATP</name>
        <dbReference type="ChEBI" id="CHEBI:30616"/>
    </ligand>
</feature>
<feature type="binding site" evidence="1">
    <location>
        <position position="178"/>
    </location>
    <ligand>
        <name>ATP</name>
        <dbReference type="ChEBI" id="CHEBI:30616"/>
    </ligand>
</feature>
<feature type="binding site" evidence="1">
    <location>
        <position position="179"/>
    </location>
    <ligand>
        <name>ATP</name>
        <dbReference type="ChEBI" id="CHEBI:30616"/>
    </ligand>
</feature>
<protein>
    <recommendedName>
        <fullName evidence="1">Chromosomal replication initiator protein DnaA</fullName>
    </recommendedName>
</protein>
<proteinExistence type="inferred from homology"/>
<organism>
    <name type="scientific">Shigella boydii serotype 4 (strain Sb227)</name>
    <dbReference type="NCBI Taxonomy" id="300268"/>
    <lineage>
        <taxon>Bacteria</taxon>
        <taxon>Pseudomonadati</taxon>
        <taxon>Pseudomonadota</taxon>
        <taxon>Gammaproteobacteria</taxon>
        <taxon>Enterobacterales</taxon>
        <taxon>Enterobacteriaceae</taxon>
        <taxon>Shigella</taxon>
    </lineage>
</organism>
<comment type="function">
    <text evidence="1">Plays an essential role in the initiation and regulation of chromosomal replication. ATP-DnaA binds to the origin of replication (oriC) to initiate formation of the DNA replication initiation complex once per cell cycle. Binds the DnaA box (a 9 base pair repeat at the origin) and separates the double-stranded (ds)DNA. Forms a right-handed helical filament on oriC DNA; dsDNA binds to the exterior of the filament while single-stranded (ss)DNA is stabiized in the filament's interior. The ATP-DnaA-oriC complex binds and stabilizes one strand of the AT-rich DNA unwinding element (DUE), permitting loading of DNA polymerase. After initiation quickly degrades to an ADP-DnaA complex that is not apt for DNA replication. Binds acidic phospholipids.</text>
</comment>
<comment type="subunit">
    <text evidence="1">Oligomerizes as a right-handed, spiral filament on DNA at oriC.</text>
</comment>
<comment type="subcellular location">
    <subcellularLocation>
        <location evidence="1">Cytoplasm</location>
    </subcellularLocation>
</comment>
<comment type="domain">
    <text evidence="1">Domain I is involved in oligomerization and binding regulators, domain II is flexibile and of varying length in different bacteria, domain III forms the AAA+ region, while domain IV binds dsDNA.</text>
</comment>
<comment type="similarity">
    <text evidence="1">Belongs to the DnaA family.</text>
</comment>
<evidence type="ECO:0000255" key="1">
    <source>
        <dbReference type="HAMAP-Rule" id="MF_00377"/>
    </source>
</evidence>
<evidence type="ECO:0000256" key="2">
    <source>
        <dbReference type="SAM" id="MobiDB-lite"/>
    </source>
</evidence>
<name>DNAA_SHIBS</name>
<keyword id="KW-0067">ATP-binding</keyword>
<keyword id="KW-0963">Cytoplasm</keyword>
<keyword id="KW-0235">DNA replication</keyword>
<keyword id="KW-0238">DNA-binding</keyword>
<keyword id="KW-0446">Lipid-binding</keyword>
<keyword id="KW-0547">Nucleotide-binding</keyword>
<accession>Q31UV5</accession>
<dbReference type="EMBL" id="CP000036">
    <property type="protein sequence ID" value="ABB68153.1"/>
    <property type="molecule type" value="Genomic_DNA"/>
</dbReference>
<dbReference type="RefSeq" id="WP_000059110.1">
    <property type="nucleotide sequence ID" value="NC_007613.1"/>
</dbReference>
<dbReference type="SMR" id="Q31UV5"/>
<dbReference type="KEGG" id="sbo:SBO_3675"/>
<dbReference type="HOGENOM" id="CLU_026910_0_1_6"/>
<dbReference type="Proteomes" id="UP000007067">
    <property type="component" value="Chromosome"/>
</dbReference>
<dbReference type="GO" id="GO:0005737">
    <property type="term" value="C:cytoplasm"/>
    <property type="evidence" value="ECO:0007669"/>
    <property type="project" value="UniProtKB-SubCell"/>
</dbReference>
<dbReference type="GO" id="GO:0005886">
    <property type="term" value="C:plasma membrane"/>
    <property type="evidence" value="ECO:0007669"/>
    <property type="project" value="TreeGrafter"/>
</dbReference>
<dbReference type="GO" id="GO:0005524">
    <property type="term" value="F:ATP binding"/>
    <property type="evidence" value="ECO:0007669"/>
    <property type="project" value="UniProtKB-UniRule"/>
</dbReference>
<dbReference type="GO" id="GO:0016887">
    <property type="term" value="F:ATP hydrolysis activity"/>
    <property type="evidence" value="ECO:0007669"/>
    <property type="project" value="InterPro"/>
</dbReference>
<dbReference type="GO" id="GO:0003688">
    <property type="term" value="F:DNA replication origin binding"/>
    <property type="evidence" value="ECO:0007669"/>
    <property type="project" value="UniProtKB-UniRule"/>
</dbReference>
<dbReference type="GO" id="GO:0008289">
    <property type="term" value="F:lipid binding"/>
    <property type="evidence" value="ECO:0007669"/>
    <property type="project" value="UniProtKB-KW"/>
</dbReference>
<dbReference type="GO" id="GO:0006270">
    <property type="term" value="P:DNA replication initiation"/>
    <property type="evidence" value="ECO:0007669"/>
    <property type="project" value="UniProtKB-UniRule"/>
</dbReference>
<dbReference type="GO" id="GO:0006275">
    <property type="term" value="P:regulation of DNA replication"/>
    <property type="evidence" value="ECO:0007669"/>
    <property type="project" value="UniProtKB-UniRule"/>
</dbReference>
<dbReference type="CDD" id="cd00009">
    <property type="entry name" value="AAA"/>
    <property type="match status" value="1"/>
</dbReference>
<dbReference type="CDD" id="cd06571">
    <property type="entry name" value="Bac_DnaA_C"/>
    <property type="match status" value="1"/>
</dbReference>
<dbReference type="FunFam" id="1.10.1750.10:FF:000001">
    <property type="entry name" value="Chromosomal replication initiator protein DnaA"/>
    <property type="match status" value="1"/>
</dbReference>
<dbReference type="FunFam" id="1.10.8.60:FF:000003">
    <property type="entry name" value="Chromosomal replication initiator protein DnaA"/>
    <property type="match status" value="1"/>
</dbReference>
<dbReference type="FunFam" id="3.30.300.180:FF:000001">
    <property type="entry name" value="Chromosomal replication initiator protein DnaA"/>
    <property type="match status" value="1"/>
</dbReference>
<dbReference type="FunFam" id="3.40.50.300:FF:000103">
    <property type="entry name" value="Chromosomal replication initiator protein DnaA"/>
    <property type="match status" value="1"/>
</dbReference>
<dbReference type="Gene3D" id="1.10.1750.10">
    <property type="match status" value="1"/>
</dbReference>
<dbReference type="Gene3D" id="1.10.8.60">
    <property type="match status" value="1"/>
</dbReference>
<dbReference type="Gene3D" id="3.30.300.180">
    <property type="match status" value="1"/>
</dbReference>
<dbReference type="Gene3D" id="3.40.50.300">
    <property type="entry name" value="P-loop containing nucleotide triphosphate hydrolases"/>
    <property type="match status" value="1"/>
</dbReference>
<dbReference type="HAMAP" id="MF_00377">
    <property type="entry name" value="DnaA_bact"/>
    <property type="match status" value="1"/>
</dbReference>
<dbReference type="InterPro" id="IPR003593">
    <property type="entry name" value="AAA+_ATPase"/>
</dbReference>
<dbReference type="InterPro" id="IPR001957">
    <property type="entry name" value="Chromosome_initiator_DnaA"/>
</dbReference>
<dbReference type="InterPro" id="IPR020591">
    <property type="entry name" value="Chromosome_initiator_DnaA-like"/>
</dbReference>
<dbReference type="InterPro" id="IPR018312">
    <property type="entry name" value="Chromosome_initiator_DnaA_CS"/>
</dbReference>
<dbReference type="InterPro" id="IPR013159">
    <property type="entry name" value="DnaA_C"/>
</dbReference>
<dbReference type="InterPro" id="IPR013317">
    <property type="entry name" value="DnaA_dom"/>
</dbReference>
<dbReference type="InterPro" id="IPR024633">
    <property type="entry name" value="DnaA_N_dom"/>
</dbReference>
<dbReference type="InterPro" id="IPR038454">
    <property type="entry name" value="DnaA_N_sf"/>
</dbReference>
<dbReference type="InterPro" id="IPR027417">
    <property type="entry name" value="P-loop_NTPase"/>
</dbReference>
<dbReference type="InterPro" id="IPR010921">
    <property type="entry name" value="Trp_repressor/repl_initiator"/>
</dbReference>
<dbReference type="NCBIfam" id="TIGR00362">
    <property type="entry name" value="DnaA"/>
    <property type="match status" value="1"/>
</dbReference>
<dbReference type="PANTHER" id="PTHR30050">
    <property type="entry name" value="CHROMOSOMAL REPLICATION INITIATOR PROTEIN DNAA"/>
    <property type="match status" value="1"/>
</dbReference>
<dbReference type="PANTHER" id="PTHR30050:SF2">
    <property type="entry name" value="CHROMOSOMAL REPLICATION INITIATOR PROTEIN DNAA"/>
    <property type="match status" value="1"/>
</dbReference>
<dbReference type="Pfam" id="PF00308">
    <property type="entry name" value="Bac_DnaA"/>
    <property type="match status" value="1"/>
</dbReference>
<dbReference type="Pfam" id="PF08299">
    <property type="entry name" value="Bac_DnaA_C"/>
    <property type="match status" value="1"/>
</dbReference>
<dbReference type="Pfam" id="PF11638">
    <property type="entry name" value="DnaA_N"/>
    <property type="match status" value="1"/>
</dbReference>
<dbReference type="PRINTS" id="PR00051">
    <property type="entry name" value="DNAA"/>
</dbReference>
<dbReference type="SMART" id="SM00382">
    <property type="entry name" value="AAA"/>
    <property type="match status" value="1"/>
</dbReference>
<dbReference type="SMART" id="SM00760">
    <property type="entry name" value="Bac_DnaA_C"/>
    <property type="match status" value="1"/>
</dbReference>
<dbReference type="SUPFAM" id="SSF52540">
    <property type="entry name" value="P-loop containing nucleoside triphosphate hydrolases"/>
    <property type="match status" value="1"/>
</dbReference>
<dbReference type="SUPFAM" id="SSF48295">
    <property type="entry name" value="TrpR-like"/>
    <property type="match status" value="1"/>
</dbReference>
<dbReference type="PROSITE" id="PS01008">
    <property type="entry name" value="DNAA"/>
    <property type="match status" value="1"/>
</dbReference>
<sequence length="467" mass="52550">MSLSLWQQCLARLQDELPATEFSMWIRPLQAELSDNTLALYAPNRFVLDWVRDKYLNNINGLLTSFCGADAPQLRFEVGTKPVTQTPQAAVTSNVAAPAQVAQTQPQRAAPSTRSGWDNVPAPAEPTYRSNVNVKHTFDNFVEGKSNQLARAAARQVADNPGGAYNPLFLYGGTGLGKTHLLHAVGNGIMARKPNAKVVYMHSERFVQDMVKALQNNAIEEFKRYYRSVDALLIDDIQFFANKERSQEEFFHTFNALLEGNQQIILTSDRYPKEINGVEDRLKSRFGWGLTVAIEPPELETRVAILMKKADENDIRLPGEVAFFIAKRLRSNVRELEGALNRVIANANFTGRAITIDFVREALRDLLALQEKLVTIDNIQKTVAEYYKIKVADLLSKRRSRSVARPRQMAMALAKELTIHSLPEIGDAFGGRDHTTVLHACRKIEQLREESHDIKEDFSNLIRTLSS</sequence>
<reference key="1">
    <citation type="journal article" date="2005" name="Nucleic Acids Res.">
        <title>Genome dynamics and diversity of Shigella species, the etiologic agents of bacillary dysentery.</title>
        <authorList>
            <person name="Yang F."/>
            <person name="Yang J."/>
            <person name="Zhang X."/>
            <person name="Chen L."/>
            <person name="Jiang Y."/>
            <person name="Yan Y."/>
            <person name="Tang X."/>
            <person name="Wang J."/>
            <person name="Xiong Z."/>
            <person name="Dong J."/>
            <person name="Xue Y."/>
            <person name="Zhu Y."/>
            <person name="Xu X."/>
            <person name="Sun L."/>
            <person name="Chen S."/>
            <person name="Nie H."/>
            <person name="Peng J."/>
            <person name="Xu J."/>
            <person name="Wang Y."/>
            <person name="Yuan Z."/>
            <person name="Wen Y."/>
            <person name="Yao Z."/>
            <person name="Shen Y."/>
            <person name="Qiang B."/>
            <person name="Hou Y."/>
            <person name="Yu J."/>
            <person name="Jin Q."/>
        </authorList>
    </citation>
    <scope>NUCLEOTIDE SEQUENCE [LARGE SCALE GENOMIC DNA]</scope>
    <source>
        <strain>Sb227</strain>
    </source>
</reference>